<proteinExistence type="inferred from homology"/>
<reference key="1">
    <citation type="journal article" date="1997" name="Proc. Natl. Acad. Sci. U.S.A.">
        <title>Sequence of a 189-kb segment of the chromosome of Rhodobacter capsulatus SB1003.</title>
        <authorList>
            <person name="Vlcek C."/>
            <person name="Paces V."/>
            <person name="Maltsev N."/>
            <person name="Paces J."/>
            <person name="Haselkorn R."/>
            <person name="Fonstein M."/>
        </authorList>
    </citation>
    <scope>NUCLEOTIDE SEQUENCE [GENOMIC DNA]</scope>
    <source>
        <strain>ATCC BAA-309 / NBRC 16581 / SB1003</strain>
    </source>
</reference>
<reference key="2">
    <citation type="journal article" date="2010" name="J. Bacteriol.">
        <title>Complete genome sequence of the photosynthetic purple nonsulfur bacterium Rhodobacter capsulatus SB 1003.</title>
        <authorList>
            <person name="Strnad H."/>
            <person name="Lapidus A."/>
            <person name="Paces J."/>
            <person name="Ulbrich P."/>
            <person name="Vlcek C."/>
            <person name="Paces V."/>
            <person name="Haselkorn R."/>
        </authorList>
    </citation>
    <scope>NUCLEOTIDE SEQUENCE [LARGE SCALE GENOMIC DNA]</scope>
    <source>
        <strain>ATCC BAA-309 / NBRC 16581 / SB1003</strain>
    </source>
</reference>
<name>TRMFO_RHOCB</name>
<keyword id="KW-0963">Cytoplasm</keyword>
<keyword id="KW-0274">FAD</keyword>
<keyword id="KW-0285">Flavoprotein</keyword>
<keyword id="KW-0489">Methyltransferase</keyword>
<keyword id="KW-0520">NAD</keyword>
<keyword id="KW-0521">NADP</keyword>
<keyword id="KW-1185">Reference proteome</keyword>
<keyword id="KW-0808">Transferase</keyword>
<keyword id="KW-0819">tRNA processing</keyword>
<gene>
    <name evidence="1" type="primary">trmFO</name>
    <name type="synonym">gid</name>
    <name type="ordered locus">RCAP_rcc01962</name>
</gene>
<dbReference type="EC" id="2.1.1.74" evidence="1"/>
<dbReference type="EMBL" id="AF010496">
    <property type="protein sequence ID" value="AAC16231.1"/>
    <property type="molecule type" value="Genomic_DNA"/>
</dbReference>
<dbReference type="EMBL" id="CP001312">
    <property type="protein sequence ID" value="ADE85706.1"/>
    <property type="molecule type" value="Genomic_DNA"/>
</dbReference>
<dbReference type="PIR" id="T03578">
    <property type="entry name" value="T03578"/>
</dbReference>
<dbReference type="RefSeq" id="WP_013067685.1">
    <property type="nucleotide sequence ID" value="NC_014034.1"/>
</dbReference>
<dbReference type="SMR" id="O68141"/>
<dbReference type="STRING" id="272942.RCAP_rcc01962"/>
<dbReference type="GeneID" id="31490830"/>
<dbReference type="KEGG" id="rcp:RCAP_rcc01962"/>
<dbReference type="eggNOG" id="COG1206">
    <property type="taxonomic scope" value="Bacteria"/>
</dbReference>
<dbReference type="HOGENOM" id="CLU_033057_1_0_5"/>
<dbReference type="OrthoDB" id="9803114at2"/>
<dbReference type="Proteomes" id="UP000002361">
    <property type="component" value="Chromosome"/>
</dbReference>
<dbReference type="GO" id="GO:0005829">
    <property type="term" value="C:cytosol"/>
    <property type="evidence" value="ECO:0007669"/>
    <property type="project" value="TreeGrafter"/>
</dbReference>
<dbReference type="GO" id="GO:0050660">
    <property type="term" value="F:flavin adenine dinucleotide binding"/>
    <property type="evidence" value="ECO:0007669"/>
    <property type="project" value="UniProtKB-UniRule"/>
</dbReference>
<dbReference type="GO" id="GO:0047151">
    <property type="term" value="F:tRNA (uracil(54)-C5)-methyltransferase activity, 5,10-methylenetetrahydrofolate-dependent"/>
    <property type="evidence" value="ECO:0007669"/>
    <property type="project" value="UniProtKB-UniRule"/>
</dbReference>
<dbReference type="GO" id="GO:0030488">
    <property type="term" value="P:tRNA methylation"/>
    <property type="evidence" value="ECO:0007669"/>
    <property type="project" value="TreeGrafter"/>
</dbReference>
<dbReference type="GO" id="GO:0002098">
    <property type="term" value="P:tRNA wobble uridine modification"/>
    <property type="evidence" value="ECO:0007669"/>
    <property type="project" value="TreeGrafter"/>
</dbReference>
<dbReference type="Gene3D" id="3.50.50.60">
    <property type="entry name" value="FAD/NAD(P)-binding domain"/>
    <property type="match status" value="2"/>
</dbReference>
<dbReference type="HAMAP" id="MF_01037">
    <property type="entry name" value="TrmFO"/>
    <property type="match status" value="1"/>
</dbReference>
<dbReference type="InterPro" id="IPR036188">
    <property type="entry name" value="FAD/NAD-bd_sf"/>
</dbReference>
<dbReference type="InterPro" id="IPR002218">
    <property type="entry name" value="MnmG-rel"/>
</dbReference>
<dbReference type="InterPro" id="IPR020595">
    <property type="entry name" value="MnmG-rel_CS"/>
</dbReference>
<dbReference type="InterPro" id="IPR040131">
    <property type="entry name" value="MnmG_N"/>
</dbReference>
<dbReference type="InterPro" id="IPR004417">
    <property type="entry name" value="TrmFO"/>
</dbReference>
<dbReference type="NCBIfam" id="TIGR00137">
    <property type="entry name" value="gid_trmFO"/>
    <property type="match status" value="1"/>
</dbReference>
<dbReference type="NCBIfam" id="NF003739">
    <property type="entry name" value="PRK05335.1"/>
    <property type="match status" value="1"/>
</dbReference>
<dbReference type="PANTHER" id="PTHR11806">
    <property type="entry name" value="GLUCOSE INHIBITED DIVISION PROTEIN A"/>
    <property type="match status" value="1"/>
</dbReference>
<dbReference type="PANTHER" id="PTHR11806:SF2">
    <property type="entry name" value="METHYLENETETRAHYDROFOLATE--TRNA-(URACIL-5-)-METHYLTRANSFERASE TRMFO"/>
    <property type="match status" value="1"/>
</dbReference>
<dbReference type="Pfam" id="PF01134">
    <property type="entry name" value="GIDA"/>
    <property type="match status" value="1"/>
</dbReference>
<dbReference type="SUPFAM" id="SSF51905">
    <property type="entry name" value="FAD/NAD(P)-binding domain"/>
    <property type="match status" value="1"/>
</dbReference>
<dbReference type="PROSITE" id="PS01281">
    <property type="entry name" value="GIDA_2"/>
    <property type="match status" value="1"/>
</dbReference>
<comment type="function">
    <text evidence="1">Catalyzes the folate-dependent formation of 5-methyl-uridine at position 54 (M-5-U54) in all tRNAs.</text>
</comment>
<comment type="catalytic activity">
    <reaction evidence="1">
        <text>uridine(54) in tRNA + (6R)-5,10-methylene-5,6,7,8-tetrahydrofolate + NADH + H(+) = 5-methyluridine(54) in tRNA + (6S)-5,6,7,8-tetrahydrofolate + NAD(+)</text>
        <dbReference type="Rhea" id="RHEA:16873"/>
        <dbReference type="Rhea" id="RHEA-COMP:10167"/>
        <dbReference type="Rhea" id="RHEA-COMP:10193"/>
        <dbReference type="ChEBI" id="CHEBI:15378"/>
        <dbReference type="ChEBI" id="CHEBI:15636"/>
        <dbReference type="ChEBI" id="CHEBI:57453"/>
        <dbReference type="ChEBI" id="CHEBI:57540"/>
        <dbReference type="ChEBI" id="CHEBI:57945"/>
        <dbReference type="ChEBI" id="CHEBI:65315"/>
        <dbReference type="ChEBI" id="CHEBI:74447"/>
        <dbReference type="EC" id="2.1.1.74"/>
    </reaction>
</comment>
<comment type="catalytic activity">
    <reaction evidence="1">
        <text>uridine(54) in tRNA + (6R)-5,10-methylene-5,6,7,8-tetrahydrofolate + NADPH + H(+) = 5-methyluridine(54) in tRNA + (6S)-5,6,7,8-tetrahydrofolate + NADP(+)</text>
        <dbReference type="Rhea" id="RHEA:62372"/>
        <dbReference type="Rhea" id="RHEA-COMP:10167"/>
        <dbReference type="Rhea" id="RHEA-COMP:10193"/>
        <dbReference type="ChEBI" id="CHEBI:15378"/>
        <dbReference type="ChEBI" id="CHEBI:15636"/>
        <dbReference type="ChEBI" id="CHEBI:57453"/>
        <dbReference type="ChEBI" id="CHEBI:57783"/>
        <dbReference type="ChEBI" id="CHEBI:58349"/>
        <dbReference type="ChEBI" id="CHEBI:65315"/>
        <dbReference type="ChEBI" id="CHEBI:74447"/>
        <dbReference type="EC" id="2.1.1.74"/>
    </reaction>
</comment>
<comment type="cofactor">
    <cofactor evidence="1">
        <name>FAD</name>
        <dbReference type="ChEBI" id="CHEBI:57692"/>
    </cofactor>
</comment>
<comment type="subcellular location">
    <subcellularLocation>
        <location evidence="1">Cytoplasm</location>
    </subcellularLocation>
</comment>
<comment type="similarity">
    <text evidence="1">Belongs to the MnmG family. TrmFO subfamily.</text>
</comment>
<sequence>MDRLHIIGAGLAGSEAAWQAAQAGVPVVLHEMRPRVGTFAHRSGDFAEMVCSNSFRSDDDERNAVGLLHWEMRAAGGLIMATADRHALPAGGALAVDREAFSGAVTAALRAHPLISVAEEEITELPAEGHWIIATGPLTSGALAESIRAVTGAESLAFFDAIAPIVHAETTDIRCLRQSRYDKGETEEERTAYINCPMTRDQYEAFIDALLAAEKTEFHAGETAGYFDGCLPIEVMAERGRETLRHGPMKPVGLTNAHDPATKAYAVVQLRRDNALGTLYNIVGFQTKMKYGAQTAVFKMIPGLEQASFARLGGIHRNTFLNSPTLLDDQMRLRARPNLRFAGQVTGVEGYVESAAMGLLAGRMAAAGILGRSLPPPGPETAMGALVNHITGGAVAKTFQPMNVNFGLFPPLDDARGGRRGRKDRYKGYTDRAKEVFTAWLAAQA</sequence>
<accession>O68141</accession>
<accession>D5AUR7</accession>
<protein>
    <recommendedName>
        <fullName evidence="1">Methylenetetrahydrofolate--tRNA-(uracil-5-)-methyltransferase TrmFO</fullName>
        <ecNumber evidence="1">2.1.1.74</ecNumber>
    </recommendedName>
    <alternativeName>
        <fullName evidence="1">Folate-dependent tRNA (uracil-5-)-methyltransferase</fullName>
    </alternativeName>
    <alternativeName>
        <fullName evidence="1">Folate-dependent tRNA(M-5-U54)-methyltransferase</fullName>
    </alternativeName>
</protein>
<organism>
    <name type="scientific">Rhodobacter capsulatus (strain ATCC BAA-309 / NBRC 16581 / SB1003)</name>
    <dbReference type="NCBI Taxonomy" id="272942"/>
    <lineage>
        <taxon>Bacteria</taxon>
        <taxon>Pseudomonadati</taxon>
        <taxon>Pseudomonadota</taxon>
        <taxon>Alphaproteobacteria</taxon>
        <taxon>Rhodobacterales</taxon>
        <taxon>Rhodobacter group</taxon>
        <taxon>Rhodobacter</taxon>
    </lineage>
</organism>
<evidence type="ECO:0000255" key="1">
    <source>
        <dbReference type="HAMAP-Rule" id="MF_01037"/>
    </source>
</evidence>
<evidence type="ECO:0000305" key="2"/>
<feature type="chain" id="PRO_0000117256" description="Methylenetetrahydrofolate--tRNA-(uracil-5-)-methyltransferase TrmFO">
    <location>
        <begin position="1"/>
        <end position="445"/>
    </location>
</feature>
<feature type="binding site" evidence="1">
    <location>
        <begin position="8"/>
        <end position="13"/>
    </location>
    <ligand>
        <name>FAD</name>
        <dbReference type="ChEBI" id="CHEBI:57692"/>
    </ligand>
</feature>
<feature type="sequence conflict" description="In Ref. 1; AAC16231." evidence="2" ref="1">
    <original>DALLAAEKTEF</original>
    <variation>GRAARGREDRV</variation>
    <location>
        <begin position="208"/>
        <end position="218"/>
    </location>
</feature>